<name>CASP3_SAIBB</name>
<organism>
    <name type="scientific">Saimiri boliviensis boliviensis</name>
    <name type="common">Bolivian squirrel monkey</name>
    <dbReference type="NCBI Taxonomy" id="39432"/>
    <lineage>
        <taxon>Eukaryota</taxon>
        <taxon>Metazoa</taxon>
        <taxon>Chordata</taxon>
        <taxon>Craniata</taxon>
        <taxon>Vertebrata</taxon>
        <taxon>Euteleostomi</taxon>
        <taxon>Mammalia</taxon>
        <taxon>Eutheria</taxon>
        <taxon>Euarchontoglires</taxon>
        <taxon>Primates</taxon>
        <taxon>Haplorrhini</taxon>
        <taxon>Platyrrhini</taxon>
        <taxon>Cebidae</taxon>
        <taxon>Saimiriinae</taxon>
        <taxon>Saimiri</taxon>
    </lineage>
</organism>
<reference key="1">
    <citation type="journal article" date="2004" name="Cell">
        <title>Accelerated evolution of nervous system genes in the origin of Homo sapiens.</title>
        <authorList>
            <person name="Dorus S."/>
            <person name="Vallender E.J."/>
            <person name="Evans P.D."/>
            <person name="Anderson J.R."/>
            <person name="Gilbert S.L."/>
            <person name="Mahowald M."/>
            <person name="Wyckoff G.J."/>
            <person name="Malcom C.M."/>
            <person name="Lahn B.T."/>
        </authorList>
    </citation>
    <scope>NUCLEOTIDE SEQUENCE [MRNA]</scope>
</reference>
<protein>
    <recommendedName>
        <fullName>Caspase-3</fullName>
        <shortName>CASP-3</shortName>
        <ecNumber>3.4.22.56</ecNumber>
    </recommendedName>
    <component>
        <recommendedName>
            <fullName>Caspase-3 subunit p17</fullName>
        </recommendedName>
    </component>
    <component>
        <recommendedName>
            <fullName>Caspase-3 subunit p12</fullName>
        </recommendedName>
    </component>
</protein>
<proteinExistence type="evidence at transcript level"/>
<gene>
    <name type="primary">CASP3</name>
</gene>
<dbReference type="EC" id="3.4.22.56"/>
<dbReference type="EMBL" id="AY665229">
    <property type="protein sequence ID" value="AAV74267.1"/>
    <property type="molecule type" value="mRNA"/>
</dbReference>
<dbReference type="RefSeq" id="NP_001266895.1">
    <property type="nucleotide sequence ID" value="NM_001279966.1"/>
</dbReference>
<dbReference type="RefSeq" id="XP_010342651.1">
    <property type="nucleotide sequence ID" value="XM_010344349.2"/>
</dbReference>
<dbReference type="RefSeq" id="XP_010342652.1">
    <property type="nucleotide sequence ID" value="XM_010344350.2"/>
</dbReference>
<dbReference type="SMR" id="Q5IS99"/>
<dbReference type="STRING" id="39432.ENSSBOP00000011157"/>
<dbReference type="MEROPS" id="C14.003"/>
<dbReference type="Ensembl" id="ENSSBOT00000027937.1">
    <property type="protein sequence ID" value="ENSSBOP00000011157.1"/>
    <property type="gene ID" value="ENSSBOG00000022394.1"/>
</dbReference>
<dbReference type="GeneID" id="101029697"/>
<dbReference type="KEGG" id="sbq:101029697"/>
<dbReference type="CTD" id="836"/>
<dbReference type="GeneTree" id="ENSGT00940000153232"/>
<dbReference type="OMA" id="WHYFTAT"/>
<dbReference type="Proteomes" id="UP000233220">
    <property type="component" value="Unplaced"/>
</dbReference>
<dbReference type="GO" id="GO:0005829">
    <property type="term" value="C:cytosol"/>
    <property type="evidence" value="ECO:0007669"/>
    <property type="project" value="Ensembl"/>
</dbReference>
<dbReference type="GO" id="GO:0031264">
    <property type="term" value="C:death-inducing signaling complex"/>
    <property type="evidence" value="ECO:0007669"/>
    <property type="project" value="TreeGrafter"/>
</dbReference>
<dbReference type="GO" id="GO:0005634">
    <property type="term" value="C:nucleus"/>
    <property type="evidence" value="ECO:0007669"/>
    <property type="project" value="Ensembl"/>
</dbReference>
<dbReference type="GO" id="GO:0004197">
    <property type="term" value="F:cysteine-type endopeptidase activity"/>
    <property type="evidence" value="ECO:0000250"/>
    <property type="project" value="UniProtKB"/>
</dbReference>
<dbReference type="GO" id="GO:0004175">
    <property type="term" value="F:endopeptidase activity"/>
    <property type="evidence" value="ECO:0000250"/>
    <property type="project" value="UniProtKB"/>
</dbReference>
<dbReference type="GO" id="GO:0072734">
    <property type="term" value="P:cellular response to staurosporine"/>
    <property type="evidence" value="ECO:0007669"/>
    <property type="project" value="Ensembl"/>
</dbReference>
<dbReference type="GO" id="GO:0030218">
    <property type="term" value="P:erythrocyte differentiation"/>
    <property type="evidence" value="ECO:0007669"/>
    <property type="project" value="Ensembl"/>
</dbReference>
<dbReference type="GO" id="GO:0097194">
    <property type="term" value="P:execution phase of apoptosis"/>
    <property type="evidence" value="ECO:0007669"/>
    <property type="project" value="Ensembl"/>
</dbReference>
<dbReference type="GO" id="GO:0097193">
    <property type="term" value="P:intrinsic apoptotic signaling pathway"/>
    <property type="evidence" value="ECO:0007669"/>
    <property type="project" value="Ensembl"/>
</dbReference>
<dbReference type="GO" id="GO:0030216">
    <property type="term" value="P:keratinocyte differentiation"/>
    <property type="evidence" value="ECO:0007669"/>
    <property type="project" value="TreeGrafter"/>
</dbReference>
<dbReference type="GO" id="GO:0001818">
    <property type="term" value="P:negative regulation of cytokine production"/>
    <property type="evidence" value="ECO:0007669"/>
    <property type="project" value="Ensembl"/>
</dbReference>
<dbReference type="GO" id="GO:0030182">
    <property type="term" value="P:neuron differentiation"/>
    <property type="evidence" value="ECO:0007669"/>
    <property type="project" value="TreeGrafter"/>
</dbReference>
<dbReference type="GO" id="GO:0048011">
    <property type="term" value="P:neurotrophin TRK receptor signaling pathway"/>
    <property type="evidence" value="ECO:0007669"/>
    <property type="project" value="Ensembl"/>
</dbReference>
<dbReference type="GO" id="GO:1902004">
    <property type="term" value="P:positive regulation of amyloid-beta formation"/>
    <property type="evidence" value="ECO:0000250"/>
    <property type="project" value="UniProtKB"/>
</dbReference>
<dbReference type="GO" id="GO:0043525">
    <property type="term" value="P:positive regulation of neuron apoptotic process"/>
    <property type="evidence" value="ECO:0007669"/>
    <property type="project" value="TreeGrafter"/>
</dbReference>
<dbReference type="GO" id="GO:0140639">
    <property type="term" value="P:positive regulation of pyroptotic inflammatory response"/>
    <property type="evidence" value="ECO:0007669"/>
    <property type="project" value="Ensembl"/>
</dbReference>
<dbReference type="GO" id="GO:0030163">
    <property type="term" value="P:protein catabolic process"/>
    <property type="evidence" value="ECO:0007669"/>
    <property type="project" value="Ensembl"/>
</dbReference>
<dbReference type="GO" id="GO:0016485">
    <property type="term" value="P:protein processing"/>
    <property type="evidence" value="ECO:0007669"/>
    <property type="project" value="Ensembl"/>
</dbReference>
<dbReference type="GO" id="GO:0006508">
    <property type="term" value="P:proteolysis"/>
    <property type="evidence" value="ECO:0000250"/>
    <property type="project" value="UniProtKB"/>
</dbReference>
<dbReference type="GO" id="GO:0070269">
    <property type="term" value="P:pyroptotic inflammatory response"/>
    <property type="evidence" value="ECO:0007669"/>
    <property type="project" value="Ensembl"/>
</dbReference>
<dbReference type="GO" id="GO:0031647">
    <property type="term" value="P:regulation of protein stability"/>
    <property type="evidence" value="ECO:0000250"/>
    <property type="project" value="UniProtKB"/>
</dbReference>
<dbReference type="CDD" id="cd00032">
    <property type="entry name" value="CASc"/>
    <property type="match status" value="1"/>
</dbReference>
<dbReference type="FunFam" id="3.40.50.1460:FF:000001">
    <property type="entry name" value="Caspase-3 preproprotein"/>
    <property type="match status" value="1"/>
</dbReference>
<dbReference type="Gene3D" id="3.40.50.1460">
    <property type="match status" value="1"/>
</dbReference>
<dbReference type="InterPro" id="IPR029030">
    <property type="entry name" value="Caspase-like_dom_sf"/>
</dbReference>
<dbReference type="InterPro" id="IPR033139">
    <property type="entry name" value="Caspase_cys_AS"/>
</dbReference>
<dbReference type="InterPro" id="IPR016129">
    <property type="entry name" value="Caspase_his_AS"/>
</dbReference>
<dbReference type="InterPro" id="IPR002398">
    <property type="entry name" value="Pept_C14"/>
</dbReference>
<dbReference type="InterPro" id="IPR011600">
    <property type="entry name" value="Pept_C14_caspase"/>
</dbReference>
<dbReference type="InterPro" id="IPR002138">
    <property type="entry name" value="Pept_C14_p10"/>
</dbReference>
<dbReference type="InterPro" id="IPR001309">
    <property type="entry name" value="Pept_C14_p20"/>
</dbReference>
<dbReference type="InterPro" id="IPR015917">
    <property type="entry name" value="Pept_C14A"/>
</dbReference>
<dbReference type="PANTHER" id="PTHR10454">
    <property type="entry name" value="CASPASE"/>
    <property type="match status" value="1"/>
</dbReference>
<dbReference type="PANTHER" id="PTHR10454:SF198">
    <property type="entry name" value="CASPASE-3"/>
    <property type="match status" value="1"/>
</dbReference>
<dbReference type="Pfam" id="PF00656">
    <property type="entry name" value="Peptidase_C14"/>
    <property type="match status" value="1"/>
</dbReference>
<dbReference type="PRINTS" id="PR00376">
    <property type="entry name" value="IL1BCENZYME"/>
</dbReference>
<dbReference type="SMART" id="SM00115">
    <property type="entry name" value="CASc"/>
    <property type="match status" value="1"/>
</dbReference>
<dbReference type="SUPFAM" id="SSF52129">
    <property type="entry name" value="Caspase-like"/>
    <property type="match status" value="1"/>
</dbReference>
<dbReference type="PROSITE" id="PS01122">
    <property type="entry name" value="CASPASE_CYS"/>
    <property type="match status" value="1"/>
</dbReference>
<dbReference type="PROSITE" id="PS01121">
    <property type="entry name" value="CASPASE_HIS"/>
    <property type="match status" value="1"/>
</dbReference>
<dbReference type="PROSITE" id="PS50207">
    <property type="entry name" value="CASPASE_P10"/>
    <property type="match status" value="1"/>
</dbReference>
<dbReference type="PROSITE" id="PS50208">
    <property type="entry name" value="CASPASE_P20"/>
    <property type="match status" value="1"/>
</dbReference>
<feature type="propeptide" id="PRO_0000254879" evidence="2">
    <location>
        <begin position="1"/>
        <end position="9"/>
    </location>
</feature>
<feature type="propeptide" id="PRO_0000254880" evidence="2">
    <location>
        <begin position="10"/>
        <end position="28"/>
    </location>
</feature>
<feature type="chain" id="PRO_0000254881" description="Caspase-3 subunit p17" evidence="2">
    <location>
        <begin position="29"/>
        <end position="175"/>
    </location>
</feature>
<feature type="chain" id="PRO_0000254882" description="Caspase-3 subunit p12" evidence="2">
    <location>
        <begin position="176"/>
        <end position="277"/>
    </location>
</feature>
<feature type="region of interest" description="Disordered" evidence="5">
    <location>
        <begin position="1"/>
        <end position="25"/>
    </location>
</feature>
<feature type="compositionally biased region" description="Polar residues" evidence="5">
    <location>
        <begin position="1"/>
        <end position="10"/>
    </location>
</feature>
<feature type="compositionally biased region" description="Basic and acidic residues" evidence="5">
    <location>
        <begin position="11"/>
        <end position="20"/>
    </location>
</feature>
<feature type="active site" evidence="1">
    <location>
        <position position="121"/>
    </location>
</feature>
<feature type="active site" evidence="1">
    <location>
        <position position="163"/>
    </location>
</feature>
<feature type="modified residue" description="N-acetylmethionine" evidence="2">
    <location>
        <position position="1"/>
    </location>
</feature>
<feature type="modified residue" description="N6-acetyllysine" evidence="3">
    <location>
        <position position="11"/>
    </location>
</feature>
<feature type="modified residue" description="Phosphoserine" evidence="2">
    <location>
        <position position="26"/>
    </location>
</feature>
<feature type="modified residue" description="S-nitrosocysteine; in inhibited form" evidence="2">
    <location>
        <position position="163"/>
    </location>
</feature>
<evidence type="ECO:0000250" key="1">
    <source>
        <dbReference type="UniProtKB" id="P29466"/>
    </source>
</evidence>
<evidence type="ECO:0000250" key="2">
    <source>
        <dbReference type="UniProtKB" id="P42574"/>
    </source>
</evidence>
<evidence type="ECO:0000250" key="3">
    <source>
        <dbReference type="UniProtKB" id="P70677"/>
    </source>
</evidence>
<evidence type="ECO:0000250" key="4">
    <source>
        <dbReference type="UniProtKB" id="Q60431"/>
    </source>
</evidence>
<evidence type="ECO:0000256" key="5">
    <source>
        <dbReference type="SAM" id="MobiDB-lite"/>
    </source>
</evidence>
<evidence type="ECO:0000305" key="6"/>
<sequence length="277" mass="31394">MENTENSVDSKSIKNSEPKIIHGSKSVDSGISLDNSYKMDYPEMGLCIIINNKNFHKSTGMASRSGTDVDAANLRETFMNLKYEVRNKNDLTREEIVELMRNVSKEDHSKRSSFVCVLLSHGEEGIIFGTNGPVDLKKITSFFRGDCCRSLTGKPKLFIIQACRGTELDCGIETDSGVDDDMACHKIPVEADFLYAYSTAPGYYSWRNSRDGSWFIQSLCAMLKQYAHKLEFMHILTRVNRKVATEFESSSFDATFHAKKQIPCIVSMLTKELYFYQ</sequence>
<accession>Q5IS99</accession>
<comment type="function">
    <text evidence="2 3 4">Involved in the activation cascade of caspases responsible for apoptosis execution. At the onset of apoptosis, it proteolytically cleaves poly(ADP-ribose) polymerase PARP1 at a '216-Asp-|-Gly-217' bond. Cleaves and activates sterol regulatory element binding proteins (SREBPs) between the basic helix-loop-helix leucine zipper domain and the membrane attachment domain. Cleaves and activates caspase-6, -7 and -9 (CASP6, CASP7 and CASP9, respectively). Cleaves and inactivates interleukin-18 (IL18) (By similarity). Triggers cell adhesion in sympathetic neurons through RET cleavage (By similarity). Cleaves IL-1 beta between an Asp and an Ala, releasing the mature cytokine which is involved in a variety of inflammatory processes (By similarity). Cleaves and inhibits serine/threonine-protein kinase AKT1 in response to oxidative stress. Acts as an inhibitor of type I interferon production during virus-induced apoptosis by mediating cleavage of antiviral proteins CGAS, IRF3 and MAVS, thereby preventing cytokine overproduction. Also involved in pyroptosis by mediating cleavage and activation of gasdermin-E (GSDME) (By similarity). Cleaves XRCC4 and phospholipid scramblase proteins XKR4, XKR8 and XKR9, leading to promote phosphatidylserine exposure on apoptotic cell surface (By similarity). Cleaves BIRC6 following inhibition of BIRC6-caspase binding by DIABLO/SMAC (By similarity).</text>
</comment>
<comment type="catalytic activity">
    <reaction evidence="2">
        <text>Strict requirement for an Asp residue at positions P1 and P4. It has a preferred cleavage sequence of Asp-Xaa-Xaa-Asp-|- with a hydrophobic amino-acid residue at P2 and a hydrophilic amino-acid residue at P3, although Val or Ala are also accepted at this position.</text>
        <dbReference type="EC" id="3.4.22.56"/>
    </reaction>
</comment>
<comment type="activity regulation">
    <text evidence="2">Inhibited by BIRC6; following inhibition of BIRC6-caspase binding by DIABLO/SMAC, BIRC6 is subjected to caspase cleavage, leading to an increase in active caspases.</text>
</comment>
<comment type="subunit">
    <text evidence="2">Heterotetramer that consists of two anti-parallel arranged heterodimers, each one formed by a 17 kDa (p17) and a 12 kDa (p12) subunit. Interacts with BIRC6/bruce.</text>
</comment>
<comment type="subcellular location">
    <subcellularLocation>
        <location evidence="2">Cytoplasm</location>
    </subcellularLocation>
</comment>
<comment type="PTM">
    <text evidence="2">Cleavage by granzyme B, caspase-6, caspase-8 and caspase-10 generates the two active subunits. Additional processing of the propeptides is likely due to the autocatalytic activity of the activated protease. Active heterodimers between the small subunit of caspase-7 protease and the large subunit of caspase-3 also occur and vice versa.</text>
</comment>
<comment type="PTM">
    <text evidence="2">S-nitrosylated on its catalytic site cysteine in unstimulated cell lines and denitrosylated upon activation of the Fas apoptotic pathway, associated with an increase in intracellular caspase activity. Fas therefore activates caspase-3 not only by inducing the cleavage of the caspase zymogen to its active subunits, but also by stimulating the denitrosylation of its active site thiol.</text>
</comment>
<comment type="PTM">
    <text evidence="2">Ubiquitinated by BIRC6; this activity is inhibited by DIABLO/SMAC.</text>
</comment>
<comment type="similarity">
    <text evidence="6">Belongs to the peptidase C14A family.</text>
</comment>
<keyword id="KW-0007">Acetylation</keyword>
<keyword id="KW-0053">Apoptosis</keyword>
<keyword id="KW-0963">Cytoplasm</keyword>
<keyword id="KW-0378">Hydrolase</keyword>
<keyword id="KW-0597">Phosphoprotein</keyword>
<keyword id="KW-0645">Protease</keyword>
<keyword id="KW-1185">Reference proteome</keyword>
<keyword id="KW-0702">S-nitrosylation</keyword>
<keyword id="KW-0788">Thiol protease</keyword>
<keyword id="KW-0832">Ubl conjugation</keyword>
<keyword id="KW-0865">Zymogen</keyword>